<evidence type="ECO:0000255" key="1">
    <source>
        <dbReference type="HAMAP-Rule" id="MF_00360"/>
    </source>
</evidence>
<evidence type="ECO:0000256" key="2">
    <source>
        <dbReference type="SAM" id="MobiDB-lite"/>
    </source>
</evidence>
<evidence type="ECO:0000305" key="3"/>
<protein>
    <recommendedName>
        <fullName evidence="1">Small ribosomal subunit protein bS6</fullName>
    </recommendedName>
    <alternativeName>
        <fullName evidence="3">30S ribosomal protein S6</fullName>
    </alternativeName>
</protein>
<organism>
    <name type="scientific">Escherichia coli O157:H7 (strain EC4115 / EHEC)</name>
    <dbReference type="NCBI Taxonomy" id="444450"/>
    <lineage>
        <taxon>Bacteria</taxon>
        <taxon>Pseudomonadati</taxon>
        <taxon>Pseudomonadota</taxon>
        <taxon>Gammaproteobacteria</taxon>
        <taxon>Enterobacterales</taxon>
        <taxon>Enterobacteriaceae</taxon>
        <taxon>Escherichia</taxon>
    </lineage>
</organism>
<reference key="1">
    <citation type="journal article" date="2011" name="Proc. Natl. Acad. Sci. U.S.A.">
        <title>Genomic anatomy of Escherichia coli O157:H7 outbreaks.</title>
        <authorList>
            <person name="Eppinger M."/>
            <person name="Mammel M.K."/>
            <person name="Leclerc J.E."/>
            <person name="Ravel J."/>
            <person name="Cebula T.A."/>
        </authorList>
    </citation>
    <scope>NUCLEOTIDE SEQUENCE [LARGE SCALE GENOMIC DNA]</scope>
    <source>
        <strain>EC4115 / EHEC</strain>
    </source>
</reference>
<accession>B5Z2K6</accession>
<comment type="function">
    <text evidence="1">Binds together with bS18 to 16S ribosomal RNA.</text>
</comment>
<comment type="similarity">
    <text evidence="1">Belongs to the bacterial ribosomal protein bS6 family.</text>
</comment>
<sequence>MRHYEIVFMVHPDQSEQVPGMIERYTAAITGAEGKIHRLEDWGRRQLAYPINKLHKAHYVLMNVEAPQEVIDELETTFRFNDAVIRSMVMRTKHAVTEASPMVKAKDERRERRDDFANETADDAEAGDSEE</sequence>
<keyword id="KW-0007">Acetylation</keyword>
<keyword id="KW-0687">Ribonucleoprotein</keyword>
<keyword id="KW-0689">Ribosomal protein</keyword>
<keyword id="KW-0694">RNA-binding</keyword>
<keyword id="KW-0699">rRNA-binding</keyword>
<name>RS6_ECO5E</name>
<gene>
    <name evidence="1" type="primary">rpsF</name>
    <name type="ordered locus">ECH74115_5716</name>
</gene>
<feature type="chain" id="PRO_1000120744" description="Small ribosomal subunit protein bS6">
    <location>
        <begin position="1"/>
        <end position="131"/>
    </location>
</feature>
<feature type="region of interest" description="Disordered" evidence="2">
    <location>
        <begin position="98"/>
        <end position="131"/>
    </location>
</feature>
<feature type="compositionally biased region" description="Basic and acidic residues" evidence="2">
    <location>
        <begin position="104"/>
        <end position="116"/>
    </location>
</feature>
<feature type="compositionally biased region" description="Acidic residues" evidence="2">
    <location>
        <begin position="120"/>
        <end position="131"/>
    </location>
</feature>
<feature type="modified residue" description="N6-acetyllysine" evidence="1">
    <location>
        <position position="93"/>
    </location>
</feature>
<proteinExistence type="inferred from homology"/>
<dbReference type="EMBL" id="CP001164">
    <property type="protein sequence ID" value="ACI37200.1"/>
    <property type="molecule type" value="Genomic_DNA"/>
</dbReference>
<dbReference type="RefSeq" id="WP_001216676.1">
    <property type="nucleotide sequence ID" value="NC_011353.1"/>
</dbReference>
<dbReference type="SMR" id="B5Z2K6"/>
<dbReference type="GeneID" id="93777623"/>
<dbReference type="KEGG" id="ecf:ECH74115_5716"/>
<dbReference type="HOGENOM" id="CLU_113441_6_1_6"/>
<dbReference type="GO" id="GO:0022627">
    <property type="term" value="C:cytosolic small ribosomal subunit"/>
    <property type="evidence" value="ECO:0007669"/>
    <property type="project" value="TreeGrafter"/>
</dbReference>
<dbReference type="GO" id="GO:0070181">
    <property type="term" value="F:small ribosomal subunit rRNA binding"/>
    <property type="evidence" value="ECO:0007669"/>
    <property type="project" value="TreeGrafter"/>
</dbReference>
<dbReference type="GO" id="GO:0003735">
    <property type="term" value="F:structural constituent of ribosome"/>
    <property type="evidence" value="ECO:0007669"/>
    <property type="project" value="InterPro"/>
</dbReference>
<dbReference type="GO" id="GO:0006412">
    <property type="term" value="P:translation"/>
    <property type="evidence" value="ECO:0007669"/>
    <property type="project" value="UniProtKB-UniRule"/>
</dbReference>
<dbReference type="CDD" id="cd00473">
    <property type="entry name" value="bS6"/>
    <property type="match status" value="1"/>
</dbReference>
<dbReference type="FunFam" id="3.30.70.60:FF:000003">
    <property type="entry name" value="30S ribosomal protein S6"/>
    <property type="match status" value="1"/>
</dbReference>
<dbReference type="Gene3D" id="3.30.70.60">
    <property type="match status" value="1"/>
</dbReference>
<dbReference type="HAMAP" id="MF_00360">
    <property type="entry name" value="Ribosomal_bS6"/>
    <property type="match status" value="1"/>
</dbReference>
<dbReference type="InterPro" id="IPR000529">
    <property type="entry name" value="Ribosomal_bS6"/>
</dbReference>
<dbReference type="InterPro" id="IPR020815">
    <property type="entry name" value="Ribosomal_bS6_CS"/>
</dbReference>
<dbReference type="InterPro" id="IPR035980">
    <property type="entry name" value="Ribosomal_bS6_sf"/>
</dbReference>
<dbReference type="InterPro" id="IPR020814">
    <property type="entry name" value="Ribosomal_S6_plastid/chlpt"/>
</dbReference>
<dbReference type="InterPro" id="IPR014717">
    <property type="entry name" value="Transl_elong_EF1B/ribsomal_bS6"/>
</dbReference>
<dbReference type="NCBIfam" id="TIGR00166">
    <property type="entry name" value="S6"/>
    <property type="match status" value="1"/>
</dbReference>
<dbReference type="PANTHER" id="PTHR21011">
    <property type="entry name" value="MITOCHONDRIAL 28S RIBOSOMAL PROTEIN S6"/>
    <property type="match status" value="1"/>
</dbReference>
<dbReference type="PANTHER" id="PTHR21011:SF1">
    <property type="entry name" value="SMALL RIBOSOMAL SUBUNIT PROTEIN BS6M"/>
    <property type="match status" value="1"/>
</dbReference>
<dbReference type="Pfam" id="PF01250">
    <property type="entry name" value="Ribosomal_S6"/>
    <property type="match status" value="1"/>
</dbReference>
<dbReference type="SUPFAM" id="SSF54995">
    <property type="entry name" value="Ribosomal protein S6"/>
    <property type="match status" value="1"/>
</dbReference>
<dbReference type="PROSITE" id="PS01048">
    <property type="entry name" value="RIBOSOMAL_S6"/>
    <property type="match status" value="1"/>
</dbReference>